<protein>
    <recommendedName>
        <fullName>Zinc finger protein 711</fullName>
    </recommendedName>
    <alternativeName>
        <fullName>Zinc finger protein 6</fullName>
    </alternativeName>
</protein>
<organism>
    <name type="scientific">Homo sapiens</name>
    <name type="common">Human</name>
    <dbReference type="NCBI Taxonomy" id="9606"/>
    <lineage>
        <taxon>Eukaryota</taxon>
        <taxon>Metazoa</taxon>
        <taxon>Chordata</taxon>
        <taxon>Craniata</taxon>
        <taxon>Vertebrata</taxon>
        <taxon>Euteleostomi</taxon>
        <taxon>Mammalia</taxon>
        <taxon>Eutheria</taxon>
        <taxon>Euarchontoglires</taxon>
        <taxon>Primates</taxon>
        <taxon>Haplorrhini</taxon>
        <taxon>Catarrhini</taxon>
        <taxon>Hominidae</taxon>
        <taxon>Homo</taxon>
    </lineage>
</organism>
<name>ZN711_HUMAN</name>
<evidence type="ECO:0000255" key="1">
    <source>
        <dbReference type="PROSITE-ProRule" id="PRU00042"/>
    </source>
</evidence>
<evidence type="ECO:0000269" key="2">
    <source>
    </source>
</evidence>
<evidence type="ECO:0000269" key="3">
    <source>
    </source>
</evidence>
<evidence type="ECO:0000269" key="4">
    <source>
    </source>
</evidence>
<evidence type="ECO:0000269" key="5">
    <source>
    </source>
</evidence>
<evidence type="ECO:0000269" key="6">
    <source>
    </source>
</evidence>
<evidence type="ECO:0000303" key="7">
    <source>
    </source>
</evidence>
<evidence type="ECO:0000305" key="8"/>
<evidence type="ECO:0000305" key="9">
    <source>
    </source>
</evidence>
<evidence type="ECO:0007744" key="10">
    <source>
        <dbReference type="PDB" id="9CJA"/>
    </source>
</evidence>
<evidence type="ECO:0007744" key="11">
    <source>
    </source>
</evidence>
<evidence type="ECO:0007829" key="12">
    <source>
        <dbReference type="PDB" id="9CJA"/>
    </source>
</evidence>
<gene>
    <name type="primary">ZNF711</name>
    <name type="synonym">CMPX1</name>
    <name type="synonym">ZNF6</name>
</gene>
<proteinExistence type="evidence at protein level"/>
<accession>Q9Y462</accession>
<accession>B4DSV4</accession>
<accession>Q6NX42</accession>
<accession>Q9Y4J6</accession>
<dbReference type="EMBL" id="Z82216">
    <property type="status" value="NOT_ANNOTATED_CDS"/>
    <property type="molecule type" value="Genomic_DNA"/>
</dbReference>
<dbReference type="EMBL" id="BC067294">
    <property type="protein sequence ID" value="AAH67294.1"/>
    <property type="molecule type" value="mRNA"/>
</dbReference>
<dbReference type="EMBL" id="AK299933">
    <property type="protein sequence ID" value="BAG61766.1"/>
    <property type="status" value="ALT_INIT"/>
    <property type="molecule type" value="mRNA"/>
</dbReference>
<dbReference type="EMBL" id="X56465">
    <property type="protein sequence ID" value="CAA39837.2"/>
    <property type="status" value="ALT_SEQ"/>
    <property type="molecule type" value="mRNA"/>
</dbReference>
<dbReference type="CCDS" id="CCDS35344.1">
    <molecule id="Q9Y462-1"/>
</dbReference>
<dbReference type="CCDS" id="CCDS83481.1">
    <molecule id="Q9Y462-3"/>
</dbReference>
<dbReference type="PIR" id="S25409">
    <property type="entry name" value="S25409"/>
</dbReference>
<dbReference type="RefSeq" id="NP_001317503.1">
    <molecule id="Q9Y462-3"/>
    <property type="nucleotide sequence ID" value="NM_001330574.2"/>
</dbReference>
<dbReference type="RefSeq" id="NP_001362360.1">
    <molecule id="Q9Y462-3"/>
    <property type="nucleotide sequence ID" value="NM_001375431.1"/>
</dbReference>
<dbReference type="RefSeq" id="NP_001362361.1">
    <molecule id="Q9Y462-3"/>
    <property type="nucleotide sequence ID" value="NM_001375432.1"/>
</dbReference>
<dbReference type="RefSeq" id="NP_001362362.1">
    <molecule id="Q9Y462-3"/>
    <property type="nucleotide sequence ID" value="NM_001375433.1"/>
</dbReference>
<dbReference type="RefSeq" id="NP_001362363.1">
    <molecule id="Q9Y462-1"/>
    <property type="nucleotide sequence ID" value="NM_001375434.1"/>
</dbReference>
<dbReference type="RefSeq" id="NP_001362364.1">
    <molecule id="Q9Y462-1"/>
    <property type="nucleotide sequence ID" value="NM_001375435.1"/>
</dbReference>
<dbReference type="RefSeq" id="NP_001362365.1">
    <molecule id="Q9Y462-1"/>
    <property type="nucleotide sequence ID" value="NM_001375436.1"/>
</dbReference>
<dbReference type="RefSeq" id="NP_001362366.1">
    <molecule id="Q9Y462-1"/>
    <property type="nucleotide sequence ID" value="NM_001375437.1"/>
</dbReference>
<dbReference type="RefSeq" id="NP_068838.3">
    <molecule id="Q9Y462-1"/>
    <property type="nucleotide sequence ID" value="NM_021998.4"/>
</dbReference>
<dbReference type="RefSeq" id="XP_005262243.1">
    <property type="nucleotide sequence ID" value="XM_005262186.2"/>
</dbReference>
<dbReference type="RefSeq" id="XP_005262244.1">
    <molecule id="Q9Y462-3"/>
    <property type="nucleotide sequence ID" value="XM_005262187.2"/>
</dbReference>
<dbReference type="RefSeq" id="XP_005262245.1">
    <molecule id="Q9Y462-3"/>
    <property type="nucleotide sequence ID" value="XM_005262188.2"/>
</dbReference>
<dbReference type="RefSeq" id="XP_005262246.1">
    <property type="nucleotide sequence ID" value="XM_005262189.2"/>
</dbReference>
<dbReference type="RefSeq" id="XP_011529326.1">
    <property type="nucleotide sequence ID" value="XM_011531024.1"/>
</dbReference>
<dbReference type="RefSeq" id="XP_011529328.1">
    <property type="nucleotide sequence ID" value="XM_011531026.1"/>
</dbReference>
<dbReference type="RefSeq" id="XP_016885294.1">
    <property type="nucleotide sequence ID" value="XM_017029805.1"/>
</dbReference>
<dbReference type="RefSeq" id="XP_016885295.1">
    <property type="nucleotide sequence ID" value="XM_017029806.1"/>
</dbReference>
<dbReference type="RefSeq" id="XP_016885296.1">
    <property type="nucleotide sequence ID" value="XM_017029807.1"/>
</dbReference>
<dbReference type="RefSeq" id="XP_016885297.1">
    <property type="nucleotide sequence ID" value="XM_017029808.1"/>
</dbReference>
<dbReference type="RefSeq" id="XP_016885298.1">
    <molecule id="Q9Y462-1"/>
    <property type="nucleotide sequence ID" value="XM_017029809.2"/>
</dbReference>
<dbReference type="RefSeq" id="XP_047298420.1">
    <molecule id="Q9Y462-3"/>
    <property type="nucleotide sequence ID" value="XM_047442464.1"/>
</dbReference>
<dbReference type="RefSeq" id="XP_047298421.1">
    <molecule id="Q9Y462-3"/>
    <property type="nucleotide sequence ID" value="XM_047442465.1"/>
</dbReference>
<dbReference type="RefSeq" id="XP_047298422.1">
    <molecule id="Q9Y462-3"/>
    <property type="nucleotide sequence ID" value="XM_047442466.1"/>
</dbReference>
<dbReference type="RefSeq" id="XP_047298423.1">
    <molecule id="Q9Y462-1"/>
    <property type="nucleotide sequence ID" value="XM_047442467.1"/>
</dbReference>
<dbReference type="RefSeq" id="XP_047298424.1">
    <molecule id="Q9Y462-1"/>
    <property type="nucleotide sequence ID" value="XM_047442468.1"/>
</dbReference>
<dbReference type="RefSeq" id="XP_047298425.1">
    <molecule id="Q9Y462-1"/>
    <property type="nucleotide sequence ID" value="XM_047442469.1"/>
</dbReference>
<dbReference type="RefSeq" id="XP_047298426.1">
    <molecule id="Q9Y462-1"/>
    <property type="nucleotide sequence ID" value="XM_047442470.1"/>
</dbReference>
<dbReference type="RefSeq" id="XP_054183743.1">
    <molecule id="Q9Y462-3"/>
    <property type="nucleotide sequence ID" value="XM_054327768.1"/>
</dbReference>
<dbReference type="RefSeq" id="XP_054183744.1">
    <molecule id="Q9Y462-3"/>
    <property type="nucleotide sequence ID" value="XM_054327769.1"/>
</dbReference>
<dbReference type="RefSeq" id="XP_054183745.1">
    <molecule id="Q9Y462-3"/>
    <property type="nucleotide sequence ID" value="XM_054327770.1"/>
</dbReference>
<dbReference type="RefSeq" id="XP_054183746.1">
    <molecule id="Q9Y462-3"/>
    <property type="nucleotide sequence ID" value="XM_054327771.1"/>
</dbReference>
<dbReference type="RefSeq" id="XP_054183747.1">
    <molecule id="Q9Y462-3"/>
    <property type="nucleotide sequence ID" value="XM_054327772.1"/>
</dbReference>
<dbReference type="RefSeq" id="XP_054183749.1">
    <molecule id="Q9Y462-1"/>
    <property type="nucleotide sequence ID" value="XM_054327774.1"/>
</dbReference>
<dbReference type="RefSeq" id="XP_054183750.1">
    <molecule id="Q9Y462-1"/>
    <property type="nucleotide sequence ID" value="XM_054327775.1"/>
</dbReference>
<dbReference type="RefSeq" id="XP_054183751.1">
    <molecule id="Q9Y462-1"/>
    <property type="nucleotide sequence ID" value="XM_054327776.1"/>
</dbReference>
<dbReference type="RefSeq" id="XP_054183752.1">
    <molecule id="Q9Y462-1"/>
    <property type="nucleotide sequence ID" value="XM_054327777.1"/>
</dbReference>
<dbReference type="RefSeq" id="XP_054183753.1">
    <molecule id="Q9Y462-1"/>
    <property type="nucleotide sequence ID" value="XM_054327778.1"/>
</dbReference>
<dbReference type="PDB" id="9CJA">
    <property type="method" value="NMR"/>
    <property type="chains" value="A=562-588"/>
</dbReference>
<dbReference type="PDBsum" id="9CJA"/>
<dbReference type="SMR" id="Q9Y462"/>
<dbReference type="BioGRID" id="113384">
    <property type="interactions" value="32"/>
</dbReference>
<dbReference type="FunCoup" id="Q9Y462">
    <property type="interactions" value="1134"/>
</dbReference>
<dbReference type="IntAct" id="Q9Y462">
    <property type="interactions" value="15"/>
</dbReference>
<dbReference type="MINT" id="Q9Y462"/>
<dbReference type="STRING" id="9606.ENSP00000353922"/>
<dbReference type="iPTMnet" id="Q9Y462"/>
<dbReference type="PhosphoSitePlus" id="Q9Y462"/>
<dbReference type="BioMuta" id="ZNF711"/>
<dbReference type="DMDM" id="308153535"/>
<dbReference type="jPOST" id="Q9Y462"/>
<dbReference type="MassIVE" id="Q9Y462"/>
<dbReference type="PaxDb" id="9606-ENSP00000362260"/>
<dbReference type="PeptideAtlas" id="Q9Y462"/>
<dbReference type="ProteomicsDB" id="86107">
    <molecule id="Q9Y462-1"/>
</dbReference>
<dbReference type="ProteomicsDB" id="86108">
    <molecule id="Q9Y462-2"/>
</dbReference>
<dbReference type="ProteomicsDB" id="86109">
    <molecule id="Q9Y462-3"/>
</dbReference>
<dbReference type="Antibodypedia" id="44077">
    <property type="antibodies" value="54 antibodies from 21 providers"/>
</dbReference>
<dbReference type="DNASU" id="7552"/>
<dbReference type="Ensembl" id="ENST00000276123.7">
    <molecule id="Q9Y462-1"/>
    <property type="protein sequence ID" value="ENSP00000276123.3"/>
    <property type="gene ID" value="ENSG00000147180.17"/>
</dbReference>
<dbReference type="Ensembl" id="ENST00000360700.4">
    <molecule id="Q9Y462-3"/>
    <property type="protein sequence ID" value="ENSP00000353922.4"/>
    <property type="gene ID" value="ENSG00000147180.17"/>
</dbReference>
<dbReference type="Ensembl" id="ENST00000373165.7">
    <molecule id="Q9Y462-1"/>
    <property type="protein sequence ID" value="ENSP00000362260.3"/>
    <property type="gene ID" value="ENSG00000147180.17"/>
</dbReference>
<dbReference type="Ensembl" id="ENST00000674551.1">
    <molecule id="Q9Y462-3"/>
    <property type="protein sequence ID" value="ENSP00000502839.1"/>
    <property type="gene ID" value="ENSG00000147180.17"/>
</dbReference>
<dbReference type="GeneID" id="7552"/>
<dbReference type="KEGG" id="hsa:7552"/>
<dbReference type="MANE-Select" id="ENST00000674551.1">
    <molecule id="Q9Y462-3"/>
    <property type="protein sequence ID" value="ENSP00000502839.1"/>
    <property type="RefSeq nucleotide sequence ID" value="NM_001330574.2"/>
    <property type="RefSeq protein sequence ID" value="NP_001317503.1"/>
</dbReference>
<dbReference type="UCSC" id="uc004eeo.4">
    <molecule id="Q9Y462-1"/>
    <property type="organism name" value="human"/>
</dbReference>
<dbReference type="AGR" id="HGNC:13128"/>
<dbReference type="CTD" id="7552"/>
<dbReference type="DisGeNET" id="7552"/>
<dbReference type="GeneCards" id="ZNF711"/>
<dbReference type="HGNC" id="HGNC:13128">
    <property type="gene designation" value="ZNF711"/>
</dbReference>
<dbReference type="HPA" id="ENSG00000147180">
    <property type="expression patterns" value="Tissue enhanced (testis)"/>
</dbReference>
<dbReference type="MalaCards" id="ZNF711"/>
<dbReference type="MIM" id="300803">
    <property type="type" value="phenotype"/>
</dbReference>
<dbReference type="MIM" id="314990">
    <property type="type" value="gene"/>
</dbReference>
<dbReference type="neXtProt" id="NX_Q9Y462"/>
<dbReference type="OpenTargets" id="ENSG00000147180"/>
<dbReference type="Orphanet" id="777">
    <property type="disease" value="X-linked non-syndromic intellectual disability"/>
</dbReference>
<dbReference type="PharmGKB" id="PA37702"/>
<dbReference type="VEuPathDB" id="HostDB:ENSG00000147180"/>
<dbReference type="eggNOG" id="KOG1721">
    <property type="taxonomic scope" value="Eukaryota"/>
</dbReference>
<dbReference type="GeneTree" id="ENSGT00940000159611"/>
<dbReference type="HOGENOM" id="CLU_021097_0_0_1"/>
<dbReference type="InParanoid" id="Q9Y462"/>
<dbReference type="OMA" id="QEDDISC"/>
<dbReference type="OrthoDB" id="3561125at2759"/>
<dbReference type="PAN-GO" id="Q9Y462">
    <property type="GO annotations" value="2 GO annotations based on evolutionary models"/>
</dbReference>
<dbReference type="PhylomeDB" id="Q9Y462"/>
<dbReference type="TreeFam" id="TF335557"/>
<dbReference type="PathwayCommons" id="Q9Y462"/>
<dbReference type="Reactome" id="R-HSA-212436">
    <property type="pathway name" value="Generic Transcription Pathway"/>
</dbReference>
<dbReference type="SignaLink" id="Q9Y462"/>
<dbReference type="BioGRID-ORCS" id="7552">
    <property type="hits" value="15 hits in 804 CRISPR screens"/>
</dbReference>
<dbReference type="ChiTaRS" id="ZNF711">
    <property type="organism name" value="human"/>
</dbReference>
<dbReference type="GenomeRNAi" id="7552"/>
<dbReference type="Pharos" id="Q9Y462">
    <property type="development level" value="Tbio"/>
</dbReference>
<dbReference type="PRO" id="PR:Q9Y462"/>
<dbReference type="Proteomes" id="UP000005640">
    <property type="component" value="Chromosome X"/>
</dbReference>
<dbReference type="RNAct" id="Q9Y462">
    <property type="molecule type" value="protein"/>
</dbReference>
<dbReference type="Bgee" id="ENSG00000147180">
    <property type="expression patterns" value="Expressed in endothelial cell and 167 other cell types or tissues"/>
</dbReference>
<dbReference type="GO" id="GO:0000785">
    <property type="term" value="C:chromatin"/>
    <property type="evidence" value="ECO:0000250"/>
    <property type="project" value="ARUK-UCL"/>
</dbReference>
<dbReference type="GO" id="GO:0005634">
    <property type="term" value="C:nucleus"/>
    <property type="evidence" value="ECO:0000314"/>
    <property type="project" value="UniProtKB"/>
</dbReference>
<dbReference type="GO" id="GO:0000981">
    <property type="term" value="F:DNA-binding transcription factor activity, RNA polymerase II-specific"/>
    <property type="evidence" value="ECO:0000250"/>
    <property type="project" value="ARUK-UCL"/>
</dbReference>
<dbReference type="GO" id="GO:0000978">
    <property type="term" value="F:RNA polymerase II cis-regulatory region sequence-specific DNA binding"/>
    <property type="evidence" value="ECO:0000250"/>
    <property type="project" value="ARUK-UCL"/>
</dbReference>
<dbReference type="GO" id="GO:0043565">
    <property type="term" value="F:sequence-specific DNA binding"/>
    <property type="evidence" value="ECO:0000314"/>
    <property type="project" value="UniProtKB"/>
</dbReference>
<dbReference type="GO" id="GO:0008270">
    <property type="term" value="F:zinc ion binding"/>
    <property type="evidence" value="ECO:0000314"/>
    <property type="project" value="UniProtKB"/>
</dbReference>
<dbReference type="GO" id="GO:0045893">
    <property type="term" value="P:positive regulation of DNA-templated transcription"/>
    <property type="evidence" value="ECO:0000315"/>
    <property type="project" value="UniProtKB"/>
</dbReference>
<dbReference type="GO" id="GO:0045944">
    <property type="term" value="P:positive regulation of transcription by RNA polymerase II"/>
    <property type="evidence" value="ECO:0000314"/>
    <property type="project" value="UniProtKB"/>
</dbReference>
<dbReference type="GO" id="GO:0010468">
    <property type="term" value="P:regulation of gene expression"/>
    <property type="evidence" value="ECO:0000318"/>
    <property type="project" value="GO_Central"/>
</dbReference>
<dbReference type="GO" id="GO:0006357">
    <property type="term" value="P:regulation of transcription by RNA polymerase II"/>
    <property type="evidence" value="ECO:0000250"/>
    <property type="project" value="ARUK-UCL"/>
</dbReference>
<dbReference type="FunFam" id="3.30.160.60:FF:000054">
    <property type="entry name" value="Zinc finger protein 711"/>
    <property type="match status" value="1"/>
</dbReference>
<dbReference type="FunFam" id="3.30.160.60:FF:000179">
    <property type="entry name" value="Zinc finger protein 711"/>
    <property type="match status" value="1"/>
</dbReference>
<dbReference type="FunFam" id="3.30.160.60:FF:000209">
    <property type="entry name" value="Zinc finger protein 711"/>
    <property type="match status" value="2"/>
</dbReference>
<dbReference type="FunFam" id="3.30.160.60:FF:000587">
    <property type="entry name" value="Zinc finger protein 711"/>
    <property type="match status" value="1"/>
</dbReference>
<dbReference type="FunFam" id="3.30.160.60:FF:000170">
    <property type="entry name" value="Zinc finger protein 711 isoform X2"/>
    <property type="match status" value="1"/>
</dbReference>
<dbReference type="Gene3D" id="3.30.160.60">
    <property type="entry name" value="Classic Zinc Finger"/>
    <property type="match status" value="7"/>
</dbReference>
<dbReference type="InterPro" id="IPR050826">
    <property type="entry name" value="Krueppel_C2H2_ZnFinger"/>
</dbReference>
<dbReference type="InterPro" id="IPR006794">
    <property type="entry name" value="Transcrp_activ_Zfx/Zfy-dom"/>
</dbReference>
<dbReference type="InterPro" id="IPR036236">
    <property type="entry name" value="Znf_C2H2_sf"/>
</dbReference>
<dbReference type="InterPro" id="IPR013087">
    <property type="entry name" value="Znf_C2H2_type"/>
</dbReference>
<dbReference type="PANTHER" id="PTHR24377">
    <property type="entry name" value="IP01015P-RELATED"/>
    <property type="match status" value="1"/>
</dbReference>
<dbReference type="Pfam" id="PF00096">
    <property type="entry name" value="zf-C2H2"/>
    <property type="match status" value="7"/>
</dbReference>
<dbReference type="Pfam" id="PF04704">
    <property type="entry name" value="Zfx_Zfy_act"/>
    <property type="match status" value="2"/>
</dbReference>
<dbReference type="SMART" id="SM00355">
    <property type="entry name" value="ZnF_C2H2"/>
    <property type="match status" value="12"/>
</dbReference>
<dbReference type="SUPFAM" id="SSF57667">
    <property type="entry name" value="beta-beta-alpha zinc fingers"/>
    <property type="match status" value="6"/>
</dbReference>
<dbReference type="PROSITE" id="PS00028">
    <property type="entry name" value="ZINC_FINGER_C2H2_1"/>
    <property type="match status" value="6"/>
</dbReference>
<dbReference type="PROSITE" id="PS50157">
    <property type="entry name" value="ZINC_FINGER_C2H2_2"/>
    <property type="match status" value="11"/>
</dbReference>
<keyword id="KW-0002">3D-structure</keyword>
<keyword id="KW-0025">Alternative splicing</keyword>
<keyword id="KW-0225">Disease variant</keyword>
<keyword id="KW-0238">DNA-binding</keyword>
<keyword id="KW-0991">Intellectual disability</keyword>
<keyword id="KW-1017">Isopeptide bond</keyword>
<keyword id="KW-0479">Metal-binding</keyword>
<keyword id="KW-0539">Nucleus</keyword>
<keyword id="KW-1267">Proteomics identification</keyword>
<keyword id="KW-1185">Reference proteome</keyword>
<keyword id="KW-0677">Repeat</keyword>
<keyword id="KW-0804">Transcription</keyword>
<keyword id="KW-0805">Transcription regulation</keyword>
<keyword id="KW-0832">Ubl conjugation</keyword>
<keyword id="KW-0862">Zinc</keyword>
<keyword id="KW-0863">Zinc-finger</keyword>
<reference key="1">
    <citation type="journal article" date="2005" name="Nature">
        <title>The DNA sequence of the human X chromosome.</title>
        <authorList>
            <person name="Ross M.T."/>
            <person name="Grafham D.V."/>
            <person name="Coffey A.J."/>
            <person name="Scherer S."/>
            <person name="McLay K."/>
            <person name="Muzny D."/>
            <person name="Platzer M."/>
            <person name="Howell G.R."/>
            <person name="Burrows C."/>
            <person name="Bird C.P."/>
            <person name="Frankish A."/>
            <person name="Lovell F.L."/>
            <person name="Howe K.L."/>
            <person name="Ashurst J.L."/>
            <person name="Fulton R.S."/>
            <person name="Sudbrak R."/>
            <person name="Wen G."/>
            <person name="Jones M.C."/>
            <person name="Hurles M.E."/>
            <person name="Andrews T.D."/>
            <person name="Scott C.E."/>
            <person name="Searle S."/>
            <person name="Ramser J."/>
            <person name="Whittaker A."/>
            <person name="Deadman R."/>
            <person name="Carter N.P."/>
            <person name="Hunt S.E."/>
            <person name="Chen R."/>
            <person name="Cree A."/>
            <person name="Gunaratne P."/>
            <person name="Havlak P."/>
            <person name="Hodgson A."/>
            <person name="Metzker M.L."/>
            <person name="Richards S."/>
            <person name="Scott G."/>
            <person name="Steffen D."/>
            <person name="Sodergren E."/>
            <person name="Wheeler D.A."/>
            <person name="Worley K.C."/>
            <person name="Ainscough R."/>
            <person name="Ambrose K.D."/>
            <person name="Ansari-Lari M.A."/>
            <person name="Aradhya S."/>
            <person name="Ashwell R.I."/>
            <person name="Babbage A.K."/>
            <person name="Bagguley C.L."/>
            <person name="Ballabio A."/>
            <person name="Banerjee R."/>
            <person name="Barker G.E."/>
            <person name="Barlow K.F."/>
            <person name="Barrett I.P."/>
            <person name="Bates K.N."/>
            <person name="Beare D.M."/>
            <person name="Beasley H."/>
            <person name="Beasley O."/>
            <person name="Beck A."/>
            <person name="Bethel G."/>
            <person name="Blechschmidt K."/>
            <person name="Brady N."/>
            <person name="Bray-Allen S."/>
            <person name="Bridgeman A.M."/>
            <person name="Brown A.J."/>
            <person name="Brown M.J."/>
            <person name="Bonnin D."/>
            <person name="Bruford E.A."/>
            <person name="Buhay C."/>
            <person name="Burch P."/>
            <person name="Burford D."/>
            <person name="Burgess J."/>
            <person name="Burrill W."/>
            <person name="Burton J."/>
            <person name="Bye J.M."/>
            <person name="Carder C."/>
            <person name="Carrel L."/>
            <person name="Chako J."/>
            <person name="Chapman J.C."/>
            <person name="Chavez D."/>
            <person name="Chen E."/>
            <person name="Chen G."/>
            <person name="Chen Y."/>
            <person name="Chen Z."/>
            <person name="Chinault C."/>
            <person name="Ciccodicola A."/>
            <person name="Clark S.Y."/>
            <person name="Clarke G."/>
            <person name="Clee C.M."/>
            <person name="Clegg S."/>
            <person name="Clerc-Blankenburg K."/>
            <person name="Clifford K."/>
            <person name="Cobley V."/>
            <person name="Cole C.G."/>
            <person name="Conquer J.S."/>
            <person name="Corby N."/>
            <person name="Connor R.E."/>
            <person name="David R."/>
            <person name="Davies J."/>
            <person name="Davis C."/>
            <person name="Davis J."/>
            <person name="Delgado O."/>
            <person name="Deshazo D."/>
            <person name="Dhami P."/>
            <person name="Ding Y."/>
            <person name="Dinh H."/>
            <person name="Dodsworth S."/>
            <person name="Draper H."/>
            <person name="Dugan-Rocha S."/>
            <person name="Dunham A."/>
            <person name="Dunn M."/>
            <person name="Durbin K.J."/>
            <person name="Dutta I."/>
            <person name="Eades T."/>
            <person name="Ellwood M."/>
            <person name="Emery-Cohen A."/>
            <person name="Errington H."/>
            <person name="Evans K.L."/>
            <person name="Faulkner L."/>
            <person name="Francis F."/>
            <person name="Frankland J."/>
            <person name="Fraser A.E."/>
            <person name="Galgoczy P."/>
            <person name="Gilbert J."/>
            <person name="Gill R."/>
            <person name="Gloeckner G."/>
            <person name="Gregory S.G."/>
            <person name="Gribble S."/>
            <person name="Griffiths C."/>
            <person name="Grocock R."/>
            <person name="Gu Y."/>
            <person name="Gwilliam R."/>
            <person name="Hamilton C."/>
            <person name="Hart E.A."/>
            <person name="Hawes A."/>
            <person name="Heath P.D."/>
            <person name="Heitmann K."/>
            <person name="Hennig S."/>
            <person name="Hernandez J."/>
            <person name="Hinzmann B."/>
            <person name="Ho S."/>
            <person name="Hoffs M."/>
            <person name="Howden P.J."/>
            <person name="Huckle E.J."/>
            <person name="Hume J."/>
            <person name="Hunt P.J."/>
            <person name="Hunt A.R."/>
            <person name="Isherwood J."/>
            <person name="Jacob L."/>
            <person name="Johnson D."/>
            <person name="Jones S."/>
            <person name="de Jong P.J."/>
            <person name="Joseph S.S."/>
            <person name="Keenan S."/>
            <person name="Kelly S."/>
            <person name="Kershaw J.K."/>
            <person name="Khan Z."/>
            <person name="Kioschis P."/>
            <person name="Klages S."/>
            <person name="Knights A.J."/>
            <person name="Kosiura A."/>
            <person name="Kovar-Smith C."/>
            <person name="Laird G.K."/>
            <person name="Langford C."/>
            <person name="Lawlor S."/>
            <person name="Leversha M."/>
            <person name="Lewis L."/>
            <person name="Liu W."/>
            <person name="Lloyd C."/>
            <person name="Lloyd D.M."/>
            <person name="Loulseged H."/>
            <person name="Loveland J.E."/>
            <person name="Lovell J.D."/>
            <person name="Lozado R."/>
            <person name="Lu J."/>
            <person name="Lyne R."/>
            <person name="Ma J."/>
            <person name="Maheshwari M."/>
            <person name="Matthews L.H."/>
            <person name="McDowall J."/>
            <person name="McLaren S."/>
            <person name="McMurray A."/>
            <person name="Meidl P."/>
            <person name="Meitinger T."/>
            <person name="Milne S."/>
            <person name="Miner G."/>
            <person name="Mistry S.L."/>
            <person name="Morgan M."/>
            <person name="Morris S."/>
            <person name="Mueller I."/>
            <person name="Mullikin J.C."/>
            <person name="Nguyen N."/>
            <person name="Nordsiek G."/>
            <person name="Nyakatura G."/>
            <person name="O'dell C.N."/>
            <person name="Okwuonu G."/>
            <person name="Palmer S."/>
            <person name="Pandian R."/>
            <person name="Parker D."/>
            <person name="Parrish J."/>
            <person name="Pasternak S."/>
            <person name="Patel D."/>
            <person name="Pearce A.V."/>
            <person name="Pearson D.M."/>
            <person name="Pelan S.E."/>
            <person name="Perez L."/>
            <person name="Porter K.M."/>
            <person name="Ramsey Y."/>
            <person name="Reichwald K."/>
            <person name="Rhodes S."/>
            <person name="Ridler K.A."/>
            <person name="Schlessinger D."/>
            <person name="Schueler M.G."/>
            <person name="Sehra H.K."/>
            <person name="Shaw-Smith C."/>
            <person name="Shen H."/>
            <person name="Sheridan E.M."/>
            <person name="Shownkeen R."/>
            <person name="Skuce C.D."/>
            <person name="Smith M.L."/>
            <person name="Sotheran E.C."/>
            <person name="Steingruber H.E."/>
            <person name="Steward C.A."/>
            <person name="Storey R."/>
            <person name="Swann R.M."/>
            <person name="Swarbreck D."/>
            <person name="Tabor P.E."/>
            <person name="Taudien S."/>
            <person name="Taylor T."/>
            <person name="Teague B."/>
            <person name="Thomas K."/>
            <person name="Thorpe A."/>
            <person name="Timms K."/>
            <person name="Tracey A."/>
            <person name="Trevanion S."/>
            <person name="Tromans A.C."/>
            <person name="d'Urso M."/>
            <person name="Verduzco D."/>
            <person name="Villasana D."/>
            <person name="Waldron L."/>
            <person name="Wall M."/>
            <person name="Wang Q."/>
            <person name="Warren J."/>
            <person name="Warry G.L."/>
            <person name="Wei X."/>
            <person name="West A."/>
            <person name="Whitehead S.L."/>
            <person name="Whiteley M.N."/>
            <person name="Wilkinson J.E."/>
            <person name="Willey D.L."/>
            <person name="Williams G."/>
            <person name="Williams L."/>
            <person name="Williamson A."/>
            <person name="Williamson H."/>
            <person name="Wilming L."/>
            <person name="Woodmansey R.L."/>
            <person name="Wray P.W."/>
            <person name="Yen J."/>
            <person name="Zhang J."/>
            <person name="Zhou J."/>
            <person name="Zoghbi H."/>
            <person name="Zorilla S."/>
            <person name="Buck D."/>
            <person name="Reinhardt R."/>
            <person name="Poustka A."/>
            <person name="Rosenthal A."/>
            <person name="Lehrach H."/>
            <person name="Meindl A."/>
            <person name="Minx P.J."/>
            <person name="Hillier L.W."/>
            <person name="Willard H.F."/>
            <person name="Wilson R.K."/>
            <person name="Waterston R.H."/>
            <person name="Rice C.M."/>
            <person name="Vaudin M."/>
            <person name="Coulson A."/>
            <person name="Nelson D.L."/>
            <person name="Weinstock G."/>
            <person name="Sulston J.E."/>
            <person name="Durbin R.M."/>
            <person name="Hubbard T."/>
            <person name="Gibbs R.A."/>
            <person name="Beck S."/>
            <person name="Rogers J."/>
            <person name="Bentley D.R."/>
        </authorList>
    </citation>
    <scope>NUCLEOTIDE SEQUENCE [LARGE SCALE GENOMIC DNA]</scope>
</reference>
<reference key="2">
    <citation type="journal article" date="2004" name="Genome Res.">
        <title>The status, quality, and expansion of the NIH full-length cDNA project: the Mammalian Gene Collection (MGC).</title>
        <authorList>
            <consortium name="The MGC Project Team"/>
        </authorList>
    </citation>
    <scope>NUCLEOTIDE SEQUENCE [LARGE SCALE MRNA] (ISOFORM 1)</scope>
    <source>
        <tissue>Testis</tissue>
    </source>
</reference>
<reference key="3">
    <citation type="journal article" date="2004" name="Nat. Genet.">
        <title>Complete sequencing and characterization of 21,243 full-length human cDNAs.</title>
        <authorList>
            <person name="Ota T."/>
            <person name="Suzuki Y."/>
            <person name="Nishikawa T."/>
            <person name="Otsuki T."/>
            <person name="Sugiyama T."/>
            <person name="Irie R."/>
            <person name="Wakamatsu A."/>
            <person name="Hayashi K."/>
            <person name="Sato H."/>
            <person name="Nagai K."/>
            <person name="Kimura K."/>
            <person name="Makita H."/>
            <person name="Sekine M."/>
            <person name="Obayashi M."/>
            <person name="Nishi T."/>
            <person name="Shibahara T."/>
            <person name="Tanaka T."/>
            <person name="Ishii S."/>
            <person name="Yamamoto J."/>
            <person name="Saito K."/>
            <person name="Kawai Y."/>
            <person name="Isono Y."/>
            <person name="Nakamura Y."/>
            <person name="Nagahari K."/>
            <person name="Murakami K."/>
            <person name="Yasuda T."/>
            <person name="Iwayanagi T."/>
            <person name="Wagatsuma M."/>
            <person name="Shiratori A."/>
            <person name="Sudo H."/>
            <person name="Hosoiri T."/>
            <person name="Kaku Y."/>
            <person name="Kodaira H."/>
            <person name="Kondo H."/>
            <person name="Sugawara M."/>
            <person name="Takahashi M."/>
            <person name="Kanda K."/>
            <person name="Yokoi T."/>
            <person name="Furuya T."/>
            <person name="Kikkawa E."/>
            <person name="Omura Y."/>
            <person name="Abe K."/>
            <person name="Kamihara K."/>
            <person name="Katsuta N."/>
            <person name="Sato K."/>
            <person name="Tanikawa M."/>
            <person name="Yamazaki M."/>
            <person name="Ninomiya K."/>
            <person name="Ishibashi T."/>
            <person name="Yamashita H."/>
            <person name="Murakawa K."/>
            <person name="Fujimori K."/>
            <person name="Tanai H."/>
            <person name="Kimata M."/>
            <person name="Watanabe M."/>
            <person name="Hiraoka S."/>
            <person name="Chiba Y."/>
            <person name="Ishida S."/>
            <person name="Ono Y."/>
            <person name="Takiguchi S."/>
            <person name="Watanabe S."/>
            <person name="Yosida M."/>
            <person name="Hotuta T."/>
            <person name="Kusano J."/>
            <person name="Kanehori K."/>
            <person name="Takahashi-Fujii A."/>
            <person name="Hara H."/>
            <person name="Tanase T.-O."/>
            <person name="Nomura Y."/>
            <person name="Togiya S."/>
            <person name="Komai F."/>
            <person name="Hara R."/>
            <person name="Takeuchi K."/>
            <person name="Arita M."/>
            <person name="Imose N."/>
            <person name="Musashino K."/>
            <person name="Yuuki H."/>
            <person name="Oshima A."/>
            <person name="Sasaki N."/>
            <person name="Aotsuka S."/>
            <person name="Yoshikawa Y."/>
            <person name="Matsunawa H."/>
            <person name="Ichihara T."/>
            <person name="Shiohata N."/>
            <person name="Sano S."/>
            <person name="Moriya S."/>
            <person name="Momiyama H."/>
            <person name="Satoh N."/>
            <person name="Takami S."/>
            <person name="Terashima Y."/>
            <person name="Suzuki O."/>
            <person name="Nakagawa S."/>
            <person name="Senoh A."/>
            <person name="Mizoguchi H."/>
            <person name="Goto Y."/>
            <person name="Shimizu F."/>
            <person name="Wakebe H."/>
            <person name="Hishigaki H."/>
            <person name="Watanabe T."/>
            <person name="Sugiyama A."/>
            <person name="Takemoto M."/>
            <person name="Kawakami B."/>
            <person name="Yamazaki M."/>
            <person name="Watanabe K."/>
            <person name="Kumagai A."/>
            <person name="Itakura S."/>
            <person name="Fukuzumi Y."/>
            <person name="Fujimori Y."/>
            <person name="Komiyama M."/>
            <person name="Tashiro H."/>
            <person name="Tanigami A."/>
            <person name="Fujiwara T."/>
            <person name="Ono T."/>
            <person name="Yamada K."/>
            <person name="Fujii Y."/>
            <person name="Ozaki K."/>
            <person name="Hirao M."/>
            <person name="Ohmori Y."/>
            <person name="Kawabata A."/>
            <person name="Hikiji T."/>
            <person name="Kobatake N."/>
            <person name="Inagaki H."/>
            <person name="Ikema Y."/>
            <person name="Okamoto S."/>
            <person name="Okitani R."/>
            <person name="Kawakami T."/>
            <person name="Noguchi S."/>
            <person name="Itoh T."/>
            <person name="Shigeta K."/>
            <person name="Senba T."/>
            <person name="Matsumura K."/>
            <person name="Nakajima Y."/>
            <person name="Mizuno T."/>
            <person name="Morinaga M."/>
            <person name="Sasaki M."/>
            <person name="Togashi T."/>
            <person name="Oyama M."/>
            <person name="Hata H."/>
            <person name="Watanabe M."/>
            <person name="Komatsu T."/>
            <person name="Mizushima-Sugano J."/>
            <person name="Satoh T."/>
            <person name="Shirai Y."/>
            <person name="Takahashi Y."/>
            <person name="Nakagawa K."/>
            <person name="Okumura K."/>
            <person name="Nagase T."/>
            <person name="Nomura N."/>
            <person name="Kikuchi H."/>
            <person name="Masuho Y."/>
            <person name="Yamashita R."/>
            <person name="Nakai K."/>
            <person name="Yada T."/>
            <person name="Nakamura Y."/>
            <person name="Ohara O."/>
            <person name="Isogai T."/>
            <person name="Sugano S."/>
        </authorList>
    </citation>
    <scope>NUCLEOTIDE SEQUENCE [LARGE SCALE MRNA] OF 185-761 (ISOFORM 3)</scope>
    <source>
        <tissue>Brain</tissue>
    </source>
</reference>
<reference key="4">
    <citation type="journal article" date="1991" name="Nucleic Acids Res.">
        <title>An X linked zinc finger gene mapping to Xq21.1-q21.3 closely related to ZFX and ZFY. Possible origins from a common ancestral gene.</title>
        <authorList>
            <person name="Lloyd S.L."/>
            <person name="Sargent C.A."/>
            <person name="Chalmers J."/>
            <person name="Lim E."/>
            <person name="Habeebu S.S."/>
            <person name="Affara N.A."/>
        </authorList>
    </citation>
    <scope>PARTIAL NUCLEOTIDE SEQUENCE [MRNA] (ISOFORM 2)</scope>
    <source>
        <tissue>Testis</tissue>
    </source>
</reference>
<reference key="5">
    <citation type="journal article" date="2009" name="Nat. Genet.">
        <title>A systematic, large-scale resequencing screen of X-chromosome coding exons in mental retardation.</title>
        <authorList>
            <person name="Tarpey P.S."/>
            <person name="Smith R."/>
            <person name="Pleasance E."/>
            <person name="Whibley A."/>
            <person name="Edkins S."/>
            <person name="Hardy C."/>
            <person name="O'Meara S."/>
            <person name="Latimer C."/>
            <person name="Dicks E."/>
            <person name="Menzies A."/>
            <person name="Stephens P."/>
            <person name="Blow M."/>
            <person name="Greenman C."/>
            <person name="Xue Y."/>
            <person name="Tyler-Smith C."/>
            <person name="Thompson D."/>
            <person name="Gray K."/>
            <person name="Andrews J."/>
            <person name="Barthorpe S."/>
            <person name="Buck G."/>
            <person name="Cole J."/>
            <person name="Dunmore R."/>
            <person name="Jones D."/>
            <person name="Maddison M."/>
            <person name="Mironenko T."/>
            <person name="Turner R."/>
            <person name="Turrell K."/>
            <person name="Varian J."/>
            <person name="West S."/>
            <person name="Widaa S."/>
            <person name="Wray P."/>
            <person name="Teague J."/>
            <person name="Butler A."/>
            <person name="Jenkinson A."/>
            <person name="Jia M."/>
            <person name="Richardson D."/>
            <person name="Shepherd R."/>
            <person name="Wooster R."/>
            <person name="Tejada M.I."/>
            <person name="Martinez F."/>
            <person name="Carvill G."/>
            <person name="Goliath R."/>
            <person name="de Brouwer A.P."/>
            <person name="van Bokhoven H."/>
            <person name="Van Esch H."/>
            <person name="Chelly J."/>
            <person name="Raynaud M."/>
            <person name="Ropers H.H."/>
            <person name="Abidi F.E."/>
            <person name="Srivastava A.K."/>
            <person name="Cox J."/>
            <person name="Luo Y."/>
            <person name="Mallya U."/>
            <person name="Moon J."/>
            <person name="Parnau J."/>
            <person name="Mohammed S."/>
            <person name="Tolmie J.L."/>
            <person name="Shoubridge C."/>
            <person name="Corbett M."/>
            <person name="Gardner A."/>
            <person name="Haan E."/>
            <person name="Rujirabanjerd S."/>
            <person name="Shaw M."/>
            <person name="Vandeleur L."/>
            <person name="Fullston T."/>
            <person name="Easton D.F."/>
            <person name="Boyle J."/>
            <person name="Partington M."/>
            <person name="Hackett A."/>
            <person name="Field M."/>
            <person name="Skinner C."/>
            <person name="Stevenson R.E."/>
            <person name="Bobrow M."/>
            <person name="Turner G."/>
            <person name="Schwartz C.E."/>
            <person name="Gecz J."/>
            <person name="Raymond F.L."/>
            <person name="Futreal P.A."/>
            <person name="Stratton M.R."/>
        </authorList>
    </citation>
    <scope>INVOLVEMENT IN XLID97</scope>
    <scope>VARIANTS [LARGE SCALE ANALYSIS] XLID97 GLU-139; ALA-221; ARG-274; THR-524; SER-601 AND ASP-622</scope>
</reference>
<reference key="6">
    <citation type="journal article" date="2010" name="Mol. Cell">
        <title>A functional link between the histone demethylase PHF8 and the transcription factor ZNF711 in X-linked mental retardation.</title>
        <authorList>
            <person name="Kleine-Kohlbrecher D."/>
            <person name="Christensen J."/>
            <person name="Vandamme J."/>
            <person name="Abarrategui I."/>
            <person name="Bak M."/>
            <person name="Tommerup N."/>
            <person name="Shi X."/>
            <person name="Gozani O."/>
            <person name="Rappsilber J."/>
            <person name="Salcini A.E."/>
            <person name="Helin K."/>
        </authorList>
    </citation>
    <scope>FUNCTION</scope>
    <scope>SUBCELLULAR LOCATION</scope>
    <scope>TISSUE SPECIFICITY</scope>
    <scope>INTERACTION WITH PHF8</scope>
</reference>
<reference key="7">
    <citation type="journal article" date="2017" name="Nat. Struct. Mol. Biol.">
        <title>Site-specific mapping of the human SUMO proteome reveals co-modification with phosphorylation.</title>
        <authorList>
            <person name="Hendriks I.A."/>
            <person name="Lyon D."/>
            <person name="Young C."/>
            <person name="Jensen L.J."/>
            <person name="Vertegaal A.C."/>
            <person name="Nielsen M.L."/>
        </authorList>
    </citation>
    <scope>SUMOYLATION [LARGE SCALE ANALYSIS] AT LYS-224; LYS-235 AND LYS-296</scope>
    <scope>IDENTIFICATION BY MASS SPECTROMETRY [LARGE SCALE ANALYSIS]</scope>
</reference>
<reference key="8">
    <citation type="journal article" date="2019" name="Hum. Mol. Genet.">
        <title>Histone demethylase KDM5C is a SAHA-sensitive central hub at the crossroads of transcriptional axes involved in multiple neurodevelopmental disorders.</title>
        <authorList>
            <person name="Poeta L."/>
            <person name="Padula A."/>
            <person name="Attianese B."/>
            <person name="Valentino M."/>
            <person name="Verrillo L."/>
            <person name="Filosa S."/>
            <person name="Shoubridge C."/>
            <person name="Barra A."/>
            <person name="Schwartz C.E."/>
            <person name="Christensen J."/>
            <person name="van Bokhoven H."/>
            <person name="Helin K."/>
            <person name="Lioi M.B."/>
            <person name="Collombat P."/>
            <person name="Gecz J."/>
            <person name="Altucci L."/>
            <person name="Di Schiavi E."/>
            <person name="Miano M.G."/>
        </authorList>
    </citation>
    <scope>FUNCTION</scope>
</reference>
<reference key="9">
    <citation type="journal article" date="2024" name="Protein Sci.">
        <title>Formerly degenerate seventh zinc finger domain from transcription factor ZNF711 rehabilitated by experimental NMR structure.</title>
        <authorList>
            <person name="Rua A.J."/>
            <person name="Alexandrescu A.T."/>
        </authorList>
    </citation>
    <scope>STRUCTURE BY NMR OF 562-588 IN COMPLEX WITH ZN(2+)</scope>
    <scope>DOMAIN</scope>
    <scope>MUTAGENESIS OF PHE-584 AND HIS-587</scope>
</reference>
<reference key="10">
    <citation type="journal article" date="2017" name="Gene">
        <title>Mutations in two large pedigrees highlight the role of ZNF711 in X-linked intellectual disability.</title>
        <authorList>
            <person name="van der Werf I.M."/>
            <person name="Van Dijck A."/>
            <person name="Reyniers E."/>
            <person name="Helsmoortel C."/>
            <person name="Kumar A.A."/>
            <person name="Kalscheuer V.M."/>
            <person name="de Brouwer A.P."/>
            <person name="Kleefstra T."/>
            <person name="van Bokhoven H."/>
            <person name="Mortier G."/>
            <person name="Janssens S."/>
            <person name="Vandeweyer G."/>
            <person name="Kooy R.F."/>
        </authorList>
    </citation>
    <scope>VARIANT XLID97 THR-244</scope>
</reference>
<feature type="chain" id="PRO_0000047329" description="Zinc finger protein 711">
    <location>
        <begin position="1"/>
        <end position="761"/>
    </location>
</feature>
<feature type="zinc finger region" description="C2H2-type 1" evidence="1">
    <location>
        <begin position="383"/>
        <end position="408"/>
    </location>
</feature>
<feature type="zinc finger region" description="C2H2-type 2" evidence="1">
    <location>
        <begin position="414"/>
        <end position="436"/>
    </location>
</feature>
<feature type="zinc finger region" description="C2H2-type 3" evidence="1">
    <location>
        <begin position="476"/>
        <end position="499"/>
    </location>
</feature>
<feature type="zinc finger region" description="C2H2-type 4" evidence="1">
    <location>
        <begin position="505"/>
        <end position="527"/>
    </location>
</feature>
<feature type="zinc finger region" description="C2H2-type 5" evidence="1">
    <location>
        <begin position="533"/>
        <end position="556"/>
    </location>
</feature>
<feature type="zinc finger region" description="C2H2-type 6; atypical" evidence="6">
    <location>
        <begin position="562"/>
        <end position="584"/>
    </location>
</feature>
<feature type="zinc finger region" description="C2H2-type 7" evidence="1">
    <location>
        <begin position="590"/>
        <end position="613"/>
    </location>
</feature>
<feature type="zinc finger region" description="C2H2-type 8" evidence="1">
    <location>
        <begin position="619"/>
        <end position="641"/>
    </location>
</feature>
<feature type="zinc finger region" description="C2H2-type 9" evidence="1">
    <location>
        <begin position="647"/>
        <end position="670"/>
    </location>
</feature>
<feature type="zinc finger region" description="C2H2-type 10" evidence="1">
    <location>
        <begin position="676"/>
        <end position="698"/>
    </location>
</feature>
<feature type="zinc finger region" description="C2H2-type 11" evidence="1">
    <location>
        <begin position="704"/>
        <end position="727"/>
    </location>
</feature>
<feature type="zinc finger region" description="C2H2-type 12" evidence="1">
    <location>
        <begin position="733"/>
        <end position="755"/>
    </location>
</feature>
<feature type="region of interest" description="Required for transcriptional activation" evidence="5">
    <location>
        <begin position="515"/>
        <end position="761"/>
    </location>
</feature>
<feature type="binding site" evidence="6 10">
    <location>
        <position position="564"/>
    </location>
    <ligand>
        <name>Zn(2+)</name>
        <dbReference type="ChEBI" id="CHEBI:29105"/>
    </ligand>
</feature>
<feature type="binding site" evidence="6 10">
    <location>
        <position position="567"/>
    </location>
    <ligand>
        <name>Zn(2+)</name>
        <dbReference type="ChEBI" id="CHEBI:29105"/>
    </ligand>
</feature>
<feature type="binding site" evidence="6 10">
    <location>
        <position position="580"/>
    </location>
    <ligand>
        <name>Zn(2+)</name>
        <dbReference type="ChEBI" id="CHEBI:29105"/>
    </ligand>
</feature>
<feature type="cross-link" description="Glycyl lysine isopeptide (Lys-Gly) (interchain with G-Cter in SUMO2)" evidence="11">
    <location>
        <position position="224"/>
    </location>
</feature>
<feature type="cross-link" description="Glycyl lysine isopeptide (Lys-Gly) (interchain with G-Cter in SUMO2)" evidence="11">
    <location>
        <position position="235"/>
    </location>
</feature>
<feature type="cross-link" description="Glycyl lysine isopeptide (Lys-Gly) (interchain with G-Cter in SUMO2)" evidence="11">
    <location>
        <position position="296"/>
    </location>
</feature>
<feature type="splice variant" id="VSP_016912" description="In isoform 2." evidence="8">
    <original>RDERRVSRRYEDCQAS</original>
    <variation>SCAEIADEVYMEVIVGEEEGTSLPEIQLEDSDVNKTVVPVVWAAAY</variation>
    <location>
        <begin position="306"/>
        <end position="321"/>
    </location>
</feature>
<feature type="splice variant" id="VSP_039887" description="In isoform 3." evidence="7">
    <original>R</original>
    <variation>SCAEIADEVYMEVIVGEEEGTSLPEIQLEDSDVNKTVVPVVWAAAYG</variation>
    <location>
        <position position="306"/>
    </location>
</feature>
<feature type="sequence variant" id="VAR_062990" description="In XLID97; uncertain significance; dbSNP:rs367654949." evidence="2">
    <original>G</original>
    <variation>E</variation>
    <location>
        <position position="139"/>
    </location>
</feature>
<feature type="sequence variant" id="VAR_062991" description="In dbSNP:rs148609081." evidence="2">
    <original>T</original>
    <variation>A</variation>
    <location>
        <position position="221"/>
    </location>
</feature>
<feature type="sequence variant" id="VAR_078572" description="In XLID97; dbSNP:rs1060505033." evidence="4">
    <original>I</original>
    <variation>T</variation>
    <location>
        <position position="244"/>
    </location>
</feature>
<feature type="sequence variant" id="VAR_062992" description="In XLID97; uncertain significance; dbSNP:rs777239465." evidence="2">
    <original>H</original>
    <variation>R</variation>
    <location>
        <position position="274"/>
    </location>
</feature>
<feature type="sequence variant" id="VAR_062993" description="In dbSNP:rs368788919." evidence="2">
    <original>M</original>
    <variation>T</variation>
    <location>
        <position position="524"/>
    </location>
</feature>
<feature type="sequence variant" id="VAR_062994" description="In XLID97; uncertain significance; dbSNP:rs760346140." evidence="2">
    <original>N</original>
    <variation>S</variation>
    <location>
        <position position="601"/>
    </location>
</feature>
<feature type="sequence variant" id="VAR_062995" description="In XLID97; uncertain significance." evidence="2">
    <original>E</original>
    <variation>D</variation>
    <location>
        <position position="622"/>
    </location>
</feature>
<feature type="mutagenesis site" description="Site can coordinate Zn(2+); when associated with A-587." evidence="6">
    <original>F</original>
    <variation>H</variation>
    <location>
        <position position="584"/>
    </location>
</feature>
<feature type="mutagenesis site" description="Does not affect binding of the protein to Zn(2+) alone or when associated with H-584." evidence="6">
    <original>H</original>
    <variation>A</variation>
    <location>
        <position position="587"/>
    </location>
</feature>
<feature type="sequence conflict" description="In Ref. 4; CAA39837." evidence="8" ref="4">
    <original>IVT</original>
    <variation>MSP</variation>
    <location>
        <begin position="264"/>
        <end position="266"/>
    </location>
</feature>
<feature type="sequence conflict" description="In Ref. 4; CAA39837." evidence="8" ref="4">
    <original>R</original>
    <variation>K</variation>
    <location>
        <position position="395"/>
    </location>
</feature>
<feature type="sequence conflict" description="In Ref. 4; CAA39837." evidence="8" ref="4">
    <original>MH</original>
    <variation>TD</variation>
    <location>
        <begin position="475"/>
        <end position="476"/>
    </location>
</feature>
<feature type="sequence conflict" description="In Ref. 3; BAG61766." evidence="8" ref="3">
    <original>L</original>
    <variation>P</variation>
    <location>
        <position position="577"/>
    </location>
</feature>
<feature type="sequence conflict" description="In Ref. 4; CAA39837." evidence="8" ref="4">
    <original>Q</original>
    <variation>T</variation>
    <location>
        <position position="648"/>
    </location>
</feature>
<feature type="sequence conflict" description="In Ref. 4; CAA39837." evidence="8" ref="4">
    <original>I</original>
    <variation>L</variation>
    <location>
        <position position="666"/>
    </location>
</feature>
<feature type="sequence conflict" description="In Ref. 4; CAA39837." evidence="8" ref="4">
    <original>RCK</original>
    <variation>GCT</variation>
    <location>
        <begin position="680"/>
        <end position="682"/>
    </location>
</feature>
<feature type="sequence conflict" description="In Ref. 4; CAA39837." evidence="8" ref="4">
    <original>I</original>
    <variation>S</variation>
    <location>
        <position position="703"/>
    </location>
</feature>
<feature type="sequence conflict" description="In Ref. 4; CAA39837." evidence="8" ref="4">
    <original>K</original>
    <variation>N</variation>
    <location>
        <position position="739"/>
    </location>
</feature>
<feature type="sequence conflict" description="In Ref. 4; CAA39837." evidence="8" ref="4">
    <original>R</original>
    <variation>K</variation>
    <location>
        <position position="754"/>
    </location>
</feature>
<feature type="turn" evidence="12">
    <location>
        <begin position="565"/>
        <end position="568"/>
    </location>
</feature>
<feature type="helix" evidence="12">
    <location>
        <begin position="574"/>
        <end position="586"/>
    </location>
</feature>
<sequence>MDSGGGSLGLHTPDSRMAHTMIMQDFVAGMAGTAHIDGDHIVVSVPEAVLVSDVVTDDGITLDHGLAAEVVHGPDIITETDVVTEGVIVPEAVLEADVAIEEDLEEDDGDHILTSELITETVRVPEQVFVADLVTGPNGHLEHVVQDCVSGVDSPTMVSEEVLVTNSDTETVIQAAGGVPGSTVTIKTEDDDDDDVKSTSEDYLMISLDDVGEKLEHMGNTPLKIGSDGSQEDAKEDGFGSEVIKVYIFKAEAEDDVEIGGTEIVTESEYTSGHSVAGVLDQSRMQREKMVYMAVKDSSQEEDDIRDERRVSRRYEDCQASGNTLDSALESRSSTAAQYLQICDGINTNKVLKQKAKKRRRGETRQWQTAVIIGPDGQPLTVYPCHICTKKFKSRGFLKRHMKNHPDHLMRKKYQCTDCDFTTNKKVSFHNHLESHKLINKVDKTHEFTEYTRRYREASPLSSNKLILRDKEPKMHKCKYCDYETAEQGLLNRHLLAVHSKNFPHVCVECGKGFRHPSELKKHMRTHTGEKPYQCQYCIFRCADQSNLKTHIKSKHGNNLPYKCEHCPQAFGDERELQRHLDLFQGHKTHQCPHCDHKSTNSSDLKRHIISVHTKDFPHKCEVCDKGFHRPSELKKHSDIHKGRKIHQCRHCDFKTSDPFILSGHILSVHTKDQPLKCKRCKRGFRQQNELKKHMKTHTGRKIYQCEYCEYSTTDASGFKRHVISIHTKDYPHRCEFCKKGFRRPSEKNQHIMRHHKEALM</sequence>
<comment type="function">
    <text evidence="3 5">Transcription regulator required for brain development (PubMed:20346720). Probably acts as a transcription factor that binds to the promoter of target genes and recruits PHF8 histone demethylase, leading to activated expression of genes involved in neuron development, such as KDM5C (PubMed:20346720, PubMed:31691806). May compete with transcription factor ARX for activation of expression of KDM5C (PubMed:31691806).</text>
</comment>
<comment type="subunit">
    <text evidence="3">Interacts with PHF8.</text>
</comment>
<comment type="interaction">
    <interactant intactId="EBI-2849152">
        <id>Q9Y462</id>
    </interactant>
    <interactant intactId="EBI-1560800">
        <id>Q9UPP1</id>
        <label>PHF8</label>
    </interactant>
    <organismsDiffer>false</organismsDiffer>
    <experiments>7</experiments>
</comment>
<comment type="subcellular location">
    <subcellularLocation>
        <location evidence="9">Nucleus</location>
    </subcellularLocation>
</comment>
<comment type="alternative products">
    <event type="alternative splicing"/>
    <isoform>
        <id>Q9Y462-1</id>
        <name>1</name>
        <sequence type="displayed"/>
    </isoform>
    <isoform>
        <id>Q9Y462-2</id>
        <name>2</name>
        <sequence type="described" ref="VSP_016912"/>
    </isoform>
    <isoform>
        <id>Q9Y462-3</id>
        <name>3</name>
        <sequence type="described" ref="VSP_039887"/>
    </isoform>
</comment>
<comment type="tissue specificity">
    <text evidence="3">Expressed in neural tissues.</text>
</comment>
<comment type="domain">
    <text evidence="6">The sixth zinc finger contains a Phe residue, Phe-584, instead of the final His residue normally found in C2H2-type zinc fingers. There is another His residue a few residues downstream, His-587, but this is not involved in coordinating zinc. Despite the His to Phe substitution, the zinc finger retains the ability to bind zinc using a tridentate metal-binding site of Cys-564, Cys-567 and His-580. The zinc finger also has hydrolytic activity against 4-nitrophenyl acetate.</text>
</comment>
<comment type="disease" evidence="2 4">
    <disease id="DI-02523">
        <name>Intellectual developmental disorder, X-linked 97</name>
        <acronym>XLID97</acronym>
        <description>A disorder characterized by significantly below average general intellectual functioning associated with impairments in adaptive behavior and manifested during the developmental period.</description>
        <dbReference type="MIM" id="300803"/>
    </disease>
    <text>The disease is caused by variants affecting the gene represented in this entry.</text>
</comment>
<comment type="similarity">
    <text evidence="8">Belongs to the krueppel C2H2-type zinc-finger protein family.</text>
</comment>
<comment type="sequence caution" evidence="8">
    <conflict type="erroneous initiation">
        <sequence resource="EMBL-CDS" id="BAG61766"/>
    </conflict>
    <text>Truncated N-terminus.</text>
</comment>
<comment type="sequence caution" evidence="8">
    <conflict type="frameshift">
        <sequence resource="EMBL-CDS" id="CAA39837"/>
    </conflict>
</comment>
<comment type="sequence caution" evidence="8">
    <conflict type="miscellaneous discrepancy">
        <sequence resource="EMBL-CDS" id="CAA39837"/>
    </conflict>
    <text>Chimera.</text>
</comment>